<evidence type="ECO:0000255" key="1">
    <source>
        <dbReference type="HAMAP-Rule" id="MF_01955"/>
    </source>
</evidence>
<comment type="catalytic activity">
    <reaction evidence="1">
        <text>urea + 2 H2O + H(+) = hydrogencarbonate + 2 NH4(+)</text>
        <dbReference type="Rhea" id="RHEA:20557"/>
        <dbReference type="ChEBI" id="CHEBI:15377"/>
        <dbReference type="ChEBI" id="CHEBI:15378"/>
        <dbReference type="ChEBI" id="CHEBI:16199"/>
        <dbReference type="ChEBI" id="CHEBI:17544"/>
        <dbReference type="ChEBI" id="CHEBI:28938"/>
        <dbReference type="EC" id="3.5.1.5"/>
    </reaction>
</comment>
<comment type="pathway">
    <text evidence="1">Nitrogen metabolism; urea degradation; CO(2) and NH(3) from urea (urease route): step 1/1.</text>
</comment>
<comment type="subunit">
    <text evidence="1">Heterohexamer of 3 UreC (alpha) and 3 UreAB (gamma/beta) subunits.</text>
</comment>
<comment type="subcellular location">
    <subcellularLocation>
        <location evidence="1">Cytoplasm</location>
    </subcellularLocation>
</comment>
<comment type="similarity">
    <text evidence="1">In the N-terminal section; belongs to the urease gamma subunit family.</text>
</comment>
<comment type="similarity">
    <text evidence="1">In the C-terminal section; belongs to the urease beta subunit family.</text>
</comment>
<keyword id="KW-0963">Cytoplasm</keyword>
<keyword id="KW-0378">Hydrolase</keyword>
<keyword id="KW-1185">Reference proteome</keyword>
<reference key="1">
    <citation type="journal article" date="2001" name="DNA Res.">
        <title>Complete genome sequence of an aerobic thermoacidophilic Crenarchaeon, Sulfolobus tokodaii strain7.</title>
        <authorList>
            <person name="Kawarabayasi Y."/>
            <person name="Hino Y."/>
            <person name="Horikawa H."/>
            <person name="Jin-no K."/>
            <person name="Takahashi M."/>
            <person name="Sekine M."/>
            <person name="Baba S."/>
            <person name="Ankai A."/>
            <person name="Kosugi H."/>
            <person name="Hosoyama A."/>
            <person name="Fukui S."/>
            <person name="Nagai Y."/>
            <person name="Nishijima K."/>
            <person name="Otsuka R."/>
            <person name="Nakazawa H."/>
            <person name="Takamiya M."/>
            <person name="Kato Y."/>
            <person name="Yoshizawa T."/>
            <person name="Tanaka T."/>
            <person name="Kudoh Y."/>
            <person name="Yamazaki J."/>
            <person name="Kushida N."/>
            <person name="Oguchi A."/>
            <person name="Aoki K."/>
            <person name="Masuda S."/>
            <person name="Yanagii M."/>
            <person name="Nishimura M."/>
            <person name="Yamagishi A."/>
            <person name="Oshima T."/>
            <person name="Kikuchi H."/>
        </authorList>
    </citation>
    <scope>NUCLEOTIDE SEQUENCE [LARGE SCALE GENOMIC DNA]</scope>
    <source>
        <strain>DSM 16993 / JCM 10545 / NBRC 100140 / 7</strain>
    </source>
</reference>
<accession>Q972V9</accession>
<accession>F9VNT6</accession>
<proteinExistence type="inferred from homology"/>
<protein>
    <recommendedName>
        <fullName evidence="1">Urease subunit gamma/beta</fullName>
        <ecNumber evidence="1">3.5.1.5</ecNumber>
    </recommendedName>
    <alternativeName>
        <fullName evidence="1">Urea amidohydrolase subunit gamma/beta</fullName>
    </alternativeName>
</protein>
<name>URE23_SULTO</name>
<organism>
    <name type="scientific">Sulfurisphaera tokodaii (strain DSM 16993 / JCM 10545 / NBRC 100140 / 7)</name>
    <name type="common">Sulfolobus tokodaii</name>
    <dbReference type="NCBI Taxonomy" id="273063"/>
    <lineage>
        <taxon>Archaea</taxon>
        <taxon>Thermoproteota</taxon>
        <taxon>Thermoprotei</taxon>
        <taxon>Sulfolobales</taxon>
        <taxon>Sulfolobaceae</taxon>
        <taxon>Sulfurisphaera</taxon>
    </lineage>
</organism>
<gene>
    <name evidence="1" type="primary">ureAB</name>
    <name type="ordered locus">STK_10290</name>
</gene>
<dbReference type="EC" id="3.5.1.5" evidence="1"/>
<dbReference type="EMBL" id="BA000023">
    <property type="protein sequence ID" value="BAK54444.1"/>
    <property type="molecule type" value="Genomic_DNA"/>
</dbReference>
<dbReference type="SMR" id="Q972V9"/>
<dbReference type="STRING" id="273063.STK_10290"/>
<dbReference type="KEGG" id="sto:STK_10290"/>
<dbReference type="PATRIC" id="fig|273063.9.peg.1157"/>
<dbReference type="eggNOG" id="arCOG04527">
    <property type="taxonomic scope" value="Archaea"/>
</dbReference>
<dbReference type="eggNOG" id="arCOG04528">
    <property type="taxonomic scope" value="Archaea"/>
</dbReference>
<dbReference type="OrthoDB" id="42431at2157"/>
<dbReference type="UniPathway" id="UPA00258">
    <property type="reaction ID" value="UER00370"/>
</dbReference>
<dbReference type="Proteomes" id="UP000001015">
    <property type="component" value="Chromosome"/>
</dbReference>
<dbReference type="GO" id="GO:0035550">
    <property type="term" value="C:urease complex"/>
    <property type="evidence" value="ECO:0007669"/>
    <property type="project" value="InterPro"/>
</dbReference>
<dbReference type="GO" id="GO:0016151">
    <property type="term" value="F:nickel cation binding"/>
    <property type="evidence" value="ECO:0007669"/>
    <property type="project" value="InterPro"/>
</dbReference>
<dbReference type="GO" id="GO:0009039">
    <property type="term" value="F:urease activity"/>
    <property type="evidence" value="ECO:0007669"/>
    <property type="project" value="UniProtKB-UniRule"/>
</dbReference>
<dbReference type="GO" id="GO:0043419">
    <property type="term" value="P:urea catabolic process"/>
    <property type="evidence" value="ECO:0007669"/>
    <property type="project" value="UniProtKB-UniRule"/>
</dbReference>
<dbReference type="CDD" id="cd00407">
    <property type="entry name" value="Urease_beta"/>
    <property type="match status" value="1"/>
</dbReference>
<dbReference type="CDD" id="cd00390">
    <property type="entry name" value="Urease_gamma"/>
    <property type="match status" value="1"/>
</dbReference>
<dbReference type="FunFam" id="2.10.150.10:FF:000001">
    <property type="entry name" value="Urease subunit beta"/>
    <property type="match status" value="1"/>
</dbReference>
<dbReference type="Gene3D" id="2.10.150.10">
    <property type="entry name" value="Urease, beta subunit"/>
    <property type="match status" value="1"/>
</dbReference>
<dbReference type="Gene3D" id="3.30.280.10">
    <property type="entry name" value="Urease, gamma-like subunit"/>
    <property type="match status" value="1"/>
</dbReference>
<dbReference type="HAMAP" id="MF_01955">
    <property type="entry name" value="Urease_beta_gamma"/>
    <property type="match status" value="1"/>
</dbReference>
<dbReference type="InterPro" id="IPR002019">
    <property type="entry name" value="Urease_beta-like"/>
</dbReference>
<dbReference type="InterPro" id="IPR036461">
    <property type="entry name" value="Urease_betasu_sf"/>
</dbReference>
<dbReference type="InterPro" id="IPR008223">
    <property type="entry name" value="Urease_gamma-beta_su"/>
</dbReference>
<dbReference type="InterPro" id="IPR002026">
    <property type="entry name" value="Urease_gamma/gamma-beta_su"/>
</dbReference>
<dbReference type="InterPro" id="IPR036463">
    <property type="entry name" value="Urease_gamma_sf"/>
</dbReference>
<dbReference type="InterPro" id="IPR050069">
    <property type="entry name" value="Urease_subunit"/>
</dbReference>
<dbReference type="NCBIfam" id="NF009671">
    <property type="entry name" value="PRK13192.1"/>
    <property type="match status" value="1"/>
</dbReference>
<dbReference type="NCBIfam" id="NF009682">
    <property type="entry name" value="PRK13203.1"/>
    <property type="match status" value="1"/>
</dbReference>
<dbReference type="NCBIfam" id="NF009712">
    <property type="entry name" value="PRK13241.1"/>
    <property type="match status" value="1"/>
</dbReference>
<dbReference type="NCBIfam" id="TIGR00192">
    <property type="entry name" value="urease_beta"/>
    <property type="match status" value="1"/>
</dbReference>
<dbReference type="NCBIfam" id="TIGR00193">
    <property type="entry name" value="urease_gam"/>
    <property type="match status" value="1"/>
</dbReference>
<dbReference type="PANTHER" id="PTHR33569">
    <property type="entry name" value="UREASE"/>
    <property type="match status" value="1"/>
</dbReference>
<dbReference type="PANTHER" id="PTHR33569:SF1">
    <property type="entry name" value="UREASE"/>
    <property type="match status" value="1"/>
</dbReference>
<dbReference type="Pfam" id="PF00699">
    <property type="entry name" value="Urease_beta"/>
    <property type="match status" value="1"/>
</dbReference>
<dbReference type="Pfam" id="PF00547">
    <property type="entry name" value="Urease_gamma"/>
    <property type="match status" value="1"/>
</dbReference>
<dbReference type="PIRSF" id="PIRSF001225">
    <property type="entry name" value="Urease_gammabeta"/>
    <property type="match status" value="1"/>
</dbReference>
<dbReference type="SUPFAM" id="SSF51278">
    <property type="entry name" value="Urease, beta-subunit"/>
    <property type="match status" value="1"/>
</dbReference>
<dbReference type="SUPFAM" id="SSF54111">
    <property type="entry name" value="Urease, gamma-subunit"/>
    <property type="match status" value="1"/>
</dbReference>
<feature type="chain" id="PRO_0000098080" description="Urease subunit gamma/beta">
    <location>
        <begin position="1"/>
        <end position="219"/>
    </location>
</feature>
<feature type="region of interest" description="Urease gamma">
    <location>
        <begin position="1"/>
        <end position="101"/>
    </location>
</feature>
<feature type="region of interest" description="Urease beta">
    <location>
        <begin position="102"/>
        <end position="219"/>
    </location>
</feature>
<sequence length="219" mass="24678">MFLTPREQEKLLISWAAEVARRRRVKGLKLNYAEAMAIIVDYILEKAREGVKMEDIIKGAQELLTENDVMEGVPELLDLVQVEATFPDGTKLVTVRNPIKSSKKTLNTYIIKQGEIEVKGEEIELEITNTGDRPIQVGSHFHFFEVNKALKFDREKAYGMRLSIPAGTAVRFEPGQTKVVRLRKIGGGRRVTGLNGLTEGSLEHNKEESIKRAKERGFA</sequence>